<reference key="1">
    <citation type="journal article" date="1990" name="Mol. Microbiol.">
        <title>Genetic characterization of Bordetella pertussis filamentous haemagglutinin: a protein processed from an unusually large precursor.</title>
        <authorList>
            <person name="Relman D.A."/>
            <person name="Domenighini M."/>
            <person name="Tuomanen E."/>
            <person name="Rappuoli R."/>
            <person name="Falkow S."/>
        </authorList>
    </citation>
    <scope>NUCLEOTIDE SEQUENCE [GENOMIC DNA]</scope>
    <scope>PARTIAL PROTEIN SEQUENCE</scope>
</reference>
<reference key="2">
    <citation type="journal article" date="2003" name="Nat. Genet.">
        <title>Comparative analysis of the genome sequences of Bordetella pertussis, Bordetella parapertussis and Bordetella bronchiseptica.</title>
        <authorList>
            <person name="Parkhill J."/>
            <person name="Sebaihia M."/>
            <person name="Preston A."/>
            <person name="Murphy L.D."/>
            <person name="Thomson N.R."/>
            <person name="Harris D.E."/>
            <person name="Holden M.T.G."/>
            <person name="Churcher C.M."/>
            <person name="Bentley S.D."/>
            <person name="Mungall K.L."/>
            <person name="Cerdeno-Tarraga A.-M."/>
            <person name="Temple L."/>
            <person name="James K.D."/>
            <person name="Harris B."/>
            <person name="Quail M.A."/>
            <person name="Achtman M."/>
            <person name="Atkin R."/>
            <person name="Baker S."/>
            <person name="Basham D."/>
            <person name="Bason N."/>
            <person name="Cherevach I."/>
            <person name="Chillingworth T."/>
            <person name="Collins M."/>
            <person name="Cronin A."/>
            <person name="Davis P."/>
            <person name="Doggett J."/>
            <person name="Feltwell T."/>
            <person name="Goble A."/>
            <person name="Hamlin N."/>
            <person name="Hauser H."/>
            <person name="Holroyd S."/>
            <person name="Jagels K."/>
            <person name="Leather S."/>
            <person name="Moule S."/>
            <person name="Norberczak H."/>
            <person name="O'Neil S."/>
            <person name="Ormond D."/>
            <person name="Price C."/>
            <person name="Rabbinowitsch E."/>
            <person name="Rutter S."/>
            <person name="Sanders M."/>
            <person name="Saunders D."/>
            <person name="Seeger K."/>
            <person name="Sharp S."/>
            <person name="Simmonds M."/>
            <person name="Skelton J."/>
            <person name="Squares R."/>
            <person name="Squares S."/>
            <person name="Stevens K."/>
            <person name="Unwin L."/>
            <person name="Whitehead S."/>
            <person name="Barrell B.G."/>
            <person name="Maskell D.J."/>
        </authorList>
    </citation>
    <scope>NUCLEOTIDE SEQUENCE [LARGE SCALE GENOMIC DNA]</scope>
    <source>
        <strain>Tohama I / ATCC BAA-589 / NCTC 13251</strain>
    </source>
</reference>
<reference key="3">
    <citation type="journal article" date="1989" name="Proc. Natl. Acad. Sci. U.S.A.">
        <title>Filamentous hemagglutinin of Bordetella pertussis: nucleotide sequence and crucial role in adherence.</title>
        <authorList>
            <person name="Relman D.A."/>
            <person name="Domenighini M."/>
            <person name="Tuomanen E."/>
            <person name="Rappuoli R."/>
            <person name="Falkow S."/>
        </authorList>
    </citation>
    <scope>NUCLEOTIDE SEQUENCE [GENOMIC DNA] OF 1-3261</scope>
    <source>
        <strain>BP338</strain>
    </source>
</reference>
<reference key="4">
    <citation type="journal article" date="1990" name="Infect. Immun.">
        <title>Cloning, partial sequence, expression and antigenic analysis of the filamentous hemagglutinin gene of Bordetella pertussis.</title>
        <authorList>
            <person name="Delisse-Gathoye A.M."/>
            <person name="Locht C."/>
            <person name="Jacob F."/>
            <person name="Raaschou-Nielsen M."/>
            <person name="Heron I."/>
            <person name="Ruelle J.L."/>
            <person name="De Wilde M."/>
            <person name="Cabezon T."/>
        </authorList>
    </citation>
    <scope>NUCLEOTIDE SEQUENCE [GENOMIC DNA] OF 1-1087</scope>
    <source>
        <strain>Tohama I / ATCC BAA-589 / NCTC 13251</strain>
    </source>
</reference>
<reference key="5">
    <citation type="journal article" date="1991" name="Mol. Microbiol.">
        <title>The bvg-dependent promoters show similar behaviour in different Bordetella species and share sequence homologies.</title>
        <authorList>
            <person name="Scarlato V."/>
            <person name="Prugnola A."/>
            <person name="Arico B."/>
            <person name="Rappuoli R."/>
        </authorList>
    </citation>
    <scope>NUCLEOTIDE SEQUENCE [GENOMIC DNA] OF 1-35</scope>
</reference>
<organism>
    <name type="scientific">Bordetella pertussis (strain Tohama I / ATCC BAA-589 / NCTC 13251)</name>
    <dbReference type="NCBI Taxonomy" id="257313"/>
    <lineage>
        <taxon>Bacteria</taxon>
        <taxon>Pseudomonadati</taxon>
        <taxon>Pseudomonadota</taxon>
        <taxon>Betaproteobacteria</taxon>
        <taxon>Burkholderiales</taxon>
        <taxon>Alcaligenaceae</taxon>
        <taxon>Bordetella</taxon>
    </lineage>
</organism>
<proteinExistence type="evidence at protein level"/>
<dbReference type="EMBL" id="M60351">
    <property type="protein sequence ID" value="AAA22974.1"/>
    <property type="molecule type" value="Genomic_DNA"/>
</dbReference>
<dbReference type="EMBL" id="BX640416">
    <property type="protein sequence ID" value="CAE42162.1"/>
    <property type="molecule type" value="Genomic_DNA"/>
</dbReference>
<dbReference type="EMBL" id="X53405">
    <property type="protein sequence ID" value="CAA37481.1"/>
    <property type="molecule type" value="Genomic_DNA"/>
</dbReference>
<dbReference type="PIR" id="S21010">
    <property type="entry name" value="S21010"/>
</dbReference>
<dbReference type="RefSeq" id="NP_880571.1">
    <property type="nucleotide sequence ID" value="NC_002929.2"/>
</dbReference>
<dbReference type="RefSeq" id="WP_010930610.1">
    <property type="nucleotide sequence ID" value="NZ_CP039022.1"/>
</dbReference>
<dbReference type="PDB" id="1RWR">
    <property type="method" value="X-ray"/>
    <property type="resolution" value="1.72 A"/>
    <property type="chains" value="A=72-372"/>
</dbReference>
<dbReference type="PDB" id="8SX0">
    <property type="method" value="X-ray"/>
    <property type="resolution" value="1.65 A"/>
    <property type="chains" value="A/B=3492-3590"/>
</dbReference>
<dbReference type="PDBsum" id="1RWR"/>
<dbReference type="PDBsum" id="8SX0"/>
<dbReference type="SMR" id="P12255"/>
<dbReference type="IntAct" id="P12255">
    <property type="interactions" value="1"/>
</dbReference>
<dbReference type="MINT" id="P12255"/>
<dbReference type="STRING" id="257313.BP1879"/>
<dbReference type="PaxDb" id="257313-BP1879"/>
<dbReference type="ABCD" id="P12255">
    <property type="antibodies" value="3 sequenced antibodies"/>
</dbReference>
<dbReference type="GeneID" id="69601663"/>
<dbReference type="KEGG" id="bpe:BP1879"/>
<dbReference type="PATRIC" id="fig|257313.5.peg.2018"/>
<dbReference type="eggNOG" id="COG3064">
    <property type="taxonomic scope" value="Bacteria"/>
</dbReference>
<dbReference type="eggNOG" id="COG3210">
    <property type="taxonomic scope" value="Bacteria"/>
</dbReference>
<dbReference type="eggNOG" id="COG4223">
    <property type="taxonomic scope" value="Bacteria"/>
</dbReference>
<dbReference type="HOGENOM" id="CLU_000227_1_0_4"/>
<dbReference type="EvolutionaryTrace" id="P12255"/>
<dbReference type="Proteomes" id="UP000002676">
    <property type="component" value="Chromosome"/>
</dbReference>
<dbReference type="GO" id="GO:0009986">
    <property type="term" value="C:cell surface"/>
    <property type="evidence" value="ECO:0007669"/>
    <property type="project" value="UniProtKB-SubCell"/>
</dbReference>
<dbReference type="GO" id="GO:0003824">
    <property type="term" value="F:catalytic activity"/>
    <property type="evidence" value="ECO:0007669"/>
    <property type="project" value="UniProtKB-ARBA"/>
</dbReference>
<dbReference type="Gene3D" id="2.160.20.10">
    <property type="entry name" value="Single-stranded right-handed beta-helix, Pectin lyase-like"/>
    <property type="match status" value="1"/>
</dbReference>
<dbReference type="InterPro" id="IPR024973">
    <property type="entry name" value="ESPR"/>
</dbReference>
<dbReference type="InterPro" id="IPR008638">
    <property type="entry name" value="FhaB/CdiA-like_TPS"/>
</dbReference>
<dbReference type="InterPro" id="IPR008619">
    <property type="entry name" value="Filamentous_hemagglutn_rpt"/>
</dbReference>
<dbReference type="InterPro" id="IPR025157">
    <property type="entry name" value="Hemagglutinin_rpt"/>
</dbReference>
<dbReference type="InterPro" id="IPR012334">
    <property type="entry name" value="Pectin_lyas_fold"/>
</dbReference>
<dbReference type="InterPro" id="IPR011050">
    <property type="entry name" value="Pectin_lyase_fold/virulence"/>
</dbReference>
<dbReference type="NCBIfam" id="TIGR01901">
    <property type="entry name" value="adhes_NPXG"/>
    <property type="match status" value="1"/>
</dbReference>
<dbReference type="Pfam" id="PF13018">
    <property type="entry name" value="ESPR"/>
    <property type="match status" value="1"/>
</dbReference>
<dbReference type="Pfam" id="PF05594">
    <property type="entry name" value="Fil_haemagg"/>
    <property type="match status" value="6"/>
</dbReference>
<dbReference type="Pfam" id="PF13332">
    <property type="entry name" value="Fil_haemagg_2"/>
    <property type="match status" value="1"/>
</dbReference>
<dbReference type="Pfam" id="PF05860">
    <property type="entry name" value="TPS"/>
    <property type="match status" value="1"/>
</dbReference>
<dbReference type="PRINTS" id="PR01217">
    <property type="entry name" value="PRICHEXTENSN"/>
</dbReference>
<dbReference type="SMART" id="SM00912">
    <property type="entry name" value="Haemagg_act"/>
    <property type="match status" value="1"/>
</dbReference>
<dbReference type="SUPFAM" id="SSF51126">
    <property type="entry name" value="Pectin lyase-like"/>
    <property type="match status" value="1"/>
</dbReference>
<accession>P12255</accession>
<accession>Q45364</accession>
<protein>
    <recommendedName>
        <fullName>Filamentous hemagglutinin</fullName>
    </recommendedName>
</protein>
<keyword id="KW-0002">3D-structure</keyword>
<keyword id="KW-0903">Direct protein sequencing</keyword>
<keyword id="KW-0348">Hemagglutinin</keyword>
<keyword id="KW-1185">Reference proteome</keyword>
<comment type="function">
    <text>Evidence for a role in host-cell binding and infection.</text>
</comment>
<comment type="subcellular location">
    <subcellularLocation>
        <location>Cell surface</location>
    </subcellularLocation>
    <text evidence="2">Secreted to the cell surface by FhaC, its two partner secretion pathway (TPS) partner.</text>
</comment>
<sequence>MNTNLYRLVFSHVRGMLVPVSEHCTVGNTFCGRTRGQARSGARATSLSVAPNALAWALMLACTGLPLVTHAQGLVPQGQTQVLQGGNKVPVVNIADPNSGGVSHNKFQQFNVANPGVVFNNGLTDGVSRIGGALTKNPNLTRQASAILAEVTDTSPSRLAGTLEVYGKGADLIIANPNGISVNGLSTLNASNLTLTTGRPSVNGGRIGLDVQQGTVTIERGGVNATGLGYFDVVARLVKLQGAVSSKQGKPLADIAVVAGANRYDHATRRATPIAAGARGAAAGAYAIDGTAAGAMYGKHITLVSSDSGLGVRQLGSLSSPSAITVSSQGEIALGDATVQRGPLSLKGAGVVSAGKLASGGGAVNVAGGGAVKIASASSVGNLAVQGGGKVQATLLNAGGTLLVSGRQAVQLGAASSRQALSVNAGGALKADKLSATRRVDVDGKQAVALGSASSNALSVRAGGALKAGKLSATGRLDVDGKQAVTLGSVASDGALSVSAGGNLRAKQLVSSAQLEVRGQREVALDDASSARGMTVVAAGALAARNLQSKGAIGVQGGEAVSVANANSDAELRVRGRGQVDLHDLSAARGADISGEGRVNIGRARSDSDVKVSAHGALSIDSMTALGAIGVQAGGSVSAKDMRSRGAVTVSGGGAVNLGDVQSDGQVRATSAGAMTVRDVAAAADLALQAGDALQAGFLKSAGAMTVNGRDAVRLDGAHAGGQLRVSSDGQAALGSLAAKGELTVSAARAATVAELKSLDNISVTGGERVSVQSVNSASRVAISAHGALDVGKVSAKSGIGLEGWGAVGADSLGSDGAISVSGRDAVRVDQARSLADISLGAEGGATLGAVEAAGSIDVRGGSTVAANSLHANRDVRVSGKDAVRVTAATSGGGLHVSSGRQLDLGAVQARGALALDGGAGVALQSAKASGTLHVQGGEHLDLGTLAAVGAVDVNGTGDVRVAKLVSDAGADLQAGRSMTLGIVDTTGDLQARAQQKLELGSVKSDGGLQAAAGGALSLAAAEVAGALELSGQGVTVDRASASRARIDSTGSVGIGALKAGAVEAASPRRARRALRQDFFTPGSVVVRAQGNVTVGRGDPHQGVLAQGDIIMDAKGGTLLLRNDALTENGTVTISADSAVLEHSTIESKISQSVLAAKGDKGKPAVSVKVAKKLFLNGTLRAVNDNNETMSGRQIDVVDGRPQITDAVTGEARKDESVVSDAALVADGGPIVVEAGELVSHAGGIGNGRNKENGASVTVRTTGNLVNKGYISAGKQGVLEVGGALTNEFLVGSDGTQRIEAQRIENRGTFQSQAPAGTAGALVVKAAEAIVHDGVMATKGEMQIAGKGGGSPTVTAGAKATTSANKLSVDVASWDNAGSLDIKKGGAQVTVAGRYAEHGEVSIQGDYTVSADAIALAAQVTQRGGAANLTSRHDTRFSNKIRLMGPLQVNAGGAVSNTGNLKVREGVTVTAASFDNETGAEVMAKSATLTTSGAARNAGKMQVKEAATIVAASVSNPGTFTAGKDITVTSRGGFDNEGKMESNKDIVIKTEQFSNGRVLDAKHDLTVTASGQADNRGSLKAGHDFTVQAQRIDNSGTMAAGHDATLKAPHLRNTGQVVAGHDIHIINSAKLENTGRVDARNDIALDVADFTNTGSLYAEHDATLTLAQGTQRDLVVDQDHILPVAEGTLRVKAKSLTTEIETGNPGSLIAEVQENIDNKQAIVVGKDLTLSSAHGNVANEANALLWAAGELTVKAQNITNKRAALIEAGGNARLTAAVALLNKLGRIRAGEDMHLDAPRIENTAKLSGEVQRKGVQDVGGGEHGRWSGIGYVNYWLRAGNGKKAGTIAAPWYGGDLTAEQSLIEVGKDLYLNAGARKDEHRHLLNEGVIQAGGHGHIGGDVDNRSVVRTVSAMEYFKTPLPVSLTALDNRAGLSPATWNFQSTYELLDYLLDQNRYEYIWGLYPTYTEWSVNTLKNLDLGYQAKPAPTAPPMPKAPELDLRGHTLESAEGRKIFGEYKKLQGEYEKAKMAVQAVEAYGEATRRVHDQLGQRYGKALGGMDAETKEVDGIIQEFAADLRTVYAKQADQATIDAETDKVAQRYKSQIDAVRLQAIQPGRVTLAKALSAALGADWRALGHSQLMQRWKDFKAGKRGAEIAFYPKEQTVLAAGAGLTLSNGAIHNGENAAQNRGRPEGLKIGAHSATSVSGSFDALRDVGLEKRLDIDDALAAVLVNPHIFTRIGAAQTSLADGAAGPALARQARQAPETDGMVDARGLGSADALASLASLDAAQGLEVSGRRNAQVADAGLAGPSAVAAPAVGAADVGVEPVTGDQVDQPVVAVGLEQPVATVRVAPPAVALPRPLFETRIKFIDQSKFYGSRYFFEQIGYKPDRAARVAGDNYFDTTLVREQVRRALGGYESRLPVRGVALVAKLMDSAGTVGKALGLKVGVAPTAQQLKQADRDFVWYVDTVIDGQKVLAPRLYLTEATRQGITDQYAGGGALIASGGDVTVNTDGHDVSSVNGLIQGRSVKVDAGKGKVVVADSKGAGGGIEADDEVDVSGRDIGIEGGKLRGKDVRLKADTVKVATSMRYDDKGRLAARGDGALDAQGGQLHIEAKRLETAGATLKGGKVKLDVDDVKLGGVYEAGSSYENKSSTPLGSLFAILSSTTETNQSAHANHYGTRIEAGTLEGKMQNLEIEGGSVDAAHTDLSVARDARFKAAADFAHAEHEKDVRQLSLGAKVGAGGYEAGFSLGSESGLEAHAGRGMTAGAEVKVGYRASHEQSSETEKSYRNANLNFGGGSVEAGNVLDIGGADINRNRYGGAAKGNAGTEEALRMRAKKVESTKYVSEQTSQSSGWSVEVASTASARSSLLTAATRLGDSVAQNVEDGREIRGELMAAQVAAEATQLVTADTAAVALSAGISADFDSSHSRSTSQNTQYLGGNLSIEATEGDATLVGAKFGGGDQVSLKAAKSVNLMAAESTFESYSESHNFHASADANLGANAVQGAVGLGLTAGMGTSHQITNETGKTYAGTSVDAANVSIDAGKDLNLSGSRVRGKHVVLDVEGDINATSKQDERNYNSSGGGWDASAGVAIQNRTLVAPVGSAGFNFNTEHDNSRLTNDGAAGVVASDGLTGHVKGDANLTGATIADLSGKGNLKVDGAVNAQNLKDYRDKDGGSGGLNVGISSTTLAPTVGVAFGRVAGEDYQAEQRATIDVGQTKDPARLQVGGGVKGTLNQDAAQATVVQRNKHWAGGGSEFSVAGKSLKKKNQVRPVETPTPDVVDGPPSRPTTPPASPQPIRATVEVSSPPPVSVATVEVVPRPKVETAQPLPPRPVAAQVVPVTPPKVEVAKVEVVPRPKVETAQPLPPRPVVAEKVTTPAVQPQLAKVETVQPVKPETTKPLPKPLPVAKVTKAPPPVVETAQPLPPVKPQKATPGPVAEVGKATVTTVQVQSAPPKPAPVAKQPAPAPKPKPKPKPKAERPKPGKTTPLSGRHVVQQQVQVLQRQASDINNTKSLPGGKLPKPVTVKLTDENGKPQTYTINRREDLMKLNGKVLSTKTTLGLEQTFRLRVEDIGGKNYRVFYETNK</sequence>
<name>FHAB_BORPE</name>
<evidence type="ECO:0000256" key="1">
    <source>
        <dbReference type="SAM" id="MobiDB-lite"/>
    </source>
</evidence>
<evidence type="ECO:0000305" key="2"/>
<evidence type="ECO:0007829" key="3">
    <source>
        <dbReference type="PDB" id="1RWR"/>
    </source>
</evidence>
<gene>
    <name type="primary">fhaB</name>
    <name type="ordered locus">BP1879</name>
</gene>
<feature type="chain" id="PRO_0000087234" description="Filamentous hemagglutinin">
    <location>
        <begin position="1"/>
        <end position="3590"/>
    </location>
</feature>
<feature type="region of interest" description="Disordered" evidence="1">
    <location>
        <begin position="3256"/>
        <end position="3309"/>
    </location>
</feature>
<feature type="region of interest" description="Disordered" evidence="1">
    <location>
        <begin position="3417"/>
        <end position="3498"/>
    </location>
</feature>
<feature type="compositionally biased region" description="Pro residues" evidence="1">
    <location>
        <begin position="3289"/>
        <end position="3299"/>
    </location>
</feature>
<feature type="compositionally biased region" description="Low complexity" evidence="1">
    <location>
        <begin position="3300"/>
        <end position="3309"/>
    </location>
</feature>
<feature type="compositionally biased region" description="Pro residues" evidence="1">
    <location>
        <begin position="3417"/>
        <end position="3432"/>
    </location>
</feature>
<feature type="sequence conflict" description="In Ref. 4; CAA37481." evidence="2" ref="4">
    <original>G</original>
    <variation>R</variation>
    <location>
        <position position="280"/>
    </location>
</feature>
<feature type="sequence conflict" description="In Ref. 4; CAA37481." evidence="2" ref="4">
    <original>G</original>
    <variation>A</variation>
    <location>
        <position position="284"/>
    </location>
</feature>
<feature type="sequence conflict" description="In Ref. 1; AAA22974, 3 and 4; CAA37481." evidence="2" ref="1 3 4">
    <original>KQ</original>
    <variation>NE</variation>
    <location>
        <begin position="507"/>
        <end position="508"/>
    </location>
</feature>
<feature type="sequence conflict" description="In Ref. 4; CAA37481." evidence="2" ref="4">
    <original>E</original>
    <variation>V</variation>
    <location>
        <position position="516"/>
    </location>
</feature>
<feature type="sequence conflict" description="In Ref. 4; CAA37481." evidence="2" ref="4">
    <original>A</original>
    <variation>G</variation>
    <location>
        <position position="614"/>
    </location>
</feature>
<feature type="sequence conflict" description="In Ref. 1; AAA22974 and 3." evidence="2" ref="1 3">
    <original>A</original>
    <variation>P</variation>
    <location>
        <position position="1454"/>
    </location>
</feature>
<feature type="sequence conflict" description="In Ref. 1; AAA22974." evidence="2" ref="1">
    <original>VEDIGGKNYRVFYETNK</original>
    <variation>SRISAARTTGSSMKPTNR</variation>
    <location>
        <begin position="3574"/>
        <end position="3590"/>
    </location>
</feature>
<feature type="strand" evidence="3">
    <location>
        <begin position="81"/>
        <end position="83"/>
    </location>
</feature>
<feature type="strand" evidence="3">
    <location>
        <begin position="91"/>
        <end position="93"/>
    </location>
</feature>
<feature type="strand" evidence="3">
    <location>
        <begin position="101"/>
        <end position="109"/>
    </location>
</feature>
<feature type="strand" evidence="3">
    <location>
        <begin position="116"/>
        <end position="121"/>
    </location>
</feature>
<feature type="strand" evidence="3">
    <location>
        <begin position="126"/>
        <end position="128"/>
    </location>
</feature>
<feature type="turn" evidence="3">
    <location>
        <begin position="129"/>
        <end position="131"/>
    </location>
</feature>
<feature type="strand" evidence="3">
    <location>
        <begin position="132"/>
        <end position="134"/>
    </location>
</feature>
<feature type="strand" evidence="3">
    <location>
        <begin position="145"/>
        <end position="151"/>
    </location>
</feature>
<feature type="strand" evidence="3">
    <location>
        <begin position="157"/>
        <end position="168"/>
    </location>
</feature>
<feature type="strand" evidence="3">
    <location>
        <begin position="170"/>
        <end position="175"/>
    </location>
</feature>
<feature type="strand" evidence="3">
    <location>
        <begin position="180"/>
        <end position="196"/>
    </location>
</feature>
<feature type="strand" evidence="3">
    <location>
        <begin position="198"/>
        <end position="203"/>
    </location>
</feature>
<feature type="strand" evidence="3">
    <location>
        <begin position="206"/>
        <end position="211"/>
    </location>
</feature>
<feature type="strand" evidence="3">
    <location>
        <begin position="215"/>
        <end position="218"/>
    </location>
</feature>
<feature type="strand" evidence="3">
    <location>
        <begin position="229"/>
        <end position="240"/>
    </location>
</feature>
<feature type="strand" evidence="3">
    <location>
        <begin position="254"/>
        <end position="265"/>
    </location>
</feature>
<feature type="turn" evidence="3">
    <location>
        <begin position="266"/>
        <end position="269"/>
    </location>
</feature>
<feature type="strand" evidence="3">
    <location>
        <begin position="270"/>
        <end position="273"/>
    </location>
</feature>
<feature type="strand" evidence="3">
    <location>
        <begin position="285"/>
        <end position="290"/>
    </location>
</feature>
<feature type="strand" evidence="3">
    <location>
        <begin position="299"/>
        <end position="305"/>
    </location>
</feature>
<feature type="strand" evidence="3">
    <location>
        <begin position="311"/>
        <end position="314"/>
    </location>
</feature>
<feature type="strand" evidence="3">
    <location>
        <begin position="318"/>
        <end position="330"/>
    </location>
</feature>
<feature type="strand" evidence="3">
    <location>
        <begin position="332"/>
        <end position="350"/>
    </location>
</feature>
<feature type="strand" evidence="3">
    <location>
        <begin position="352"/>
        <end position="359"/>
    </location>
</feature>
<feature type="strand" evidence="3">
    <location>
        <begin position="363"/>
        <end position="367"/>
    </location>
</feature>